<protein>
    <recommendedName>
        <fullName evidence="2">NADH-quinone oxidoreductase subunit B</fullName>
        <ecNumber evidence="2">7.1.1.-</ecNumber>
    </recommendedName>
    <alternativeName>
        <fullName evidence="2">NADH dehydrogenase I subunit B</fullName>
    </alternativeName>
    <alternativeName>
        <fullName evidence="2">NDH-1 subunit B</fullName>
    </alternativeName>
</protein>
<sequence length="159" mass="17560">MSIEGVLKEGFVTTTADKLINWTRTGSLWPMTFGLACCAVEMMHAGAARYDLDRFGVVFRPSPRQSDVMIVAGTLCNKMAPALRRVYDQMAEPRWVISMGSCANGGGYYHYSYSVVRGCDRIVPVDVYVPGCPPTAEALVYGVIQLQAKIRRTNTIARQ</sequence>
<feature type="chain" id="PRO_0000358388" description="NADH-quinone oxidoreductase subunit B">
    <location>
        <begin position="1"/>
        <end position="159"/>
    </location>
</feature>
<feature type="binding site" evidence="2">
    <location>
        <position position="37"/>
    </location>
    <ligand>
        <name>[4Fe-4S] cluster</name>
        <dbReference type="ChEBI" id="CHEBI:49883"/>
    </ligand>
</feature>
<feature type="binding site" evidence="2">
    <location>
        <position position="38"/>
    </location>
    <ligand>
        <name>[4Fe-4S] cluster</name>
        <dbReference type="ChEBI" id="CHEBI:49883"/>
    </ligand>
</feature>
<feature type="binding site" evidence="2">
    <location>
        <position position="102"/>
    </location>
    <ligand>
        <name>[4Fe-4S] cluster</name>
        <dbReference type="ChEBI" id="CHEBI:49883"/>
    </ligand>
</feature>
<feature type="binding site" evidence="2">
    <location>
        <position position="132"/>
    </location>
    <ligand>
        <name>[4Fe-4S] cluster</name>
        <dbReference type="ChEBI" id="CHEBI:49883"/>
    </ligand>
</feature>
<dbReference type="EC" id="7.1.1.-" evidence="2"/>
<dbReference type="EMBL" id="CP000151">
    <property type="protein sequence ID" value="ABB09170.1"/>
    <property type="molecule type" value="Genomic_DNA"/>
</dbReference>
<dbReference type="RefSeq" id="WP_006398799.1">
    <property type="nucleotide sequence ID" value="NZ_WNDV01000048.1"/>
</dbReference>
<dbReference type="SMR" id="Q39EE6"/>
<dbReference type="KEGG" id="bur:Bcep18194_A5576"/>
<dbReference type="HOGENOM" id="CLU_055737_7_3_4"/>
<dbReference type="Proteomes" id="UP000002705">
    <property type="component" value="Chromosome 1"/>
</dbReference>
<dbReference type="GO" id="GO:0005886">
    <property type="term" value="C:plasma membrane"/>
    <property type="evidence" value="ECO:0007669"/>
    <property type="project" value="UniProtKB-SubCell"/>
</dbReference>
<dbReference type="GO" id="GO:0045271">
    <property type="term" value="C:respiratory chain complex I"/>
    <property type="evidence" value="ECO:0007669"/>
    <property type="project" value="TreeGrafter"/>
</dbReference>
<dbReference type="GO" id="GO:0051539">
    <property type="term" value="F:4 iron, 4 sulfur cluster binding"/>
    <property type="evidence" value="ECO:0007669"/>
    <property type="project" value="UniProtKB-KW"/>
</dbReference>
<dbReference type="GO" id="GO:0005506">
    <property type="term" value="F:iron ion binding"/>
    <property type="evidence" value="ECO:0007669"/>
    <property type="project" value="UniProtKB-UniRule"/>
</dbReference>
<dbReference type="GO" id="GO:0008137">
    <property type="term" value="F:NADH dehydrogenase (ubiquinone) activity"/>
    <property type="evidence" value="ECO:0007669"/>
    <property type="project" value="InterPro"/>
</dbReference>
<dbReference type="GO" id="GO:0050136">
    <property type="term" value="F:NADH:ubiquinone reductase (non-electrogenic) activity"/>
    <property type="evidence" value="ECO:0007669"/>
    <property type="project" value="UniProtKB-UniRule"/>
</dbReference>
<dbReference type="GO" id="GO:0048038">
    <property type="term" value="F:quinone binding"/>
    <property type="evidence" value="ECO:0007669"/>
    <property type="project" value="UniProtKB-KW"/>
</dbReference>
<dbReference type="GO" id="GO:0009060">
    <property type="term" value="P:aerobic respiration"/>
    <property type="evidence" value="ECO:0007669"/>
    <property type="project" value="TreeGrafter"/>
</dbReference>
<dbReference type="GO" id="GO:0015990">
    <property type="term" value="P:electron transport coupled proton transport"/>
    <property type="evidence" value="ECO:0007669"/>
    <property type="project" value="TreeGrafter"/>
</dbReference>
<dbReference type="FunFam" id="3.40.50.12280:FF:000001">
    <property type="entry name" value="NADH-quinone oxidoreductase subunit B 2"/>
    <property type="match status" value="1"/>
</dbReference>
<dbReference type="Gene3D" id="3.40.50.12280">
    <property type="match status" value="1"/>
</dbReference>
<dbReference type="HAMAP" id="MF_01356">
    <property type="entry name" value="NDH1_NuoB"/>
    <property type="match status" value="1"/>
</dbReference>
<dbReference type="InterPro" id="IPR006137">
    <property type="entry name" value="NADH_UbQ_OxRdtase-like_20kDa"/>
</dbReference>
<dbReference type="InterPro" id="IPR006138">
    <property type="entry name" value="NADH_UQ_OxRdtase_20Kd_su"/>
</dbReference>
<dbReference type="NCBIfam" id="TIGR01957">
    <property type="entry name" value="nuoB_fam"/>
    <property type="match status" value="1"/>
</dbReference>
<dbReference type="NCBIfam" id="NF005012">
    <property type="entry name" value="PRK06411.1"/>
    <property type="match status" value="1"/>
</dbReference>
<dbReference type="PANTHER" id="PTHR11995">
    <property type="entry name" value="NADH DEHYDROGENASE"/>
    <property type="match status" value="1"/>
</dbReference>
<dbReference type="PANTHER" id="PTHR11995:SF14">
    <property type="entry name" value="NADH DEHYDROGENASE [UBIQUINONE] IRON-SULFUR PROTEIN 7, MITOCHONDRIAL"/>
    <property type="match status" value="1"/>
</dbReference>
<dbReference type="Pfam" id="PF01058">
    <property type="entry name" value="Oxidored_q6"/>
    <property type="match status" value="1"/>
</dbReference>
<dbReference type="SUPFAM" id="SSF56770">
    <property type="entry name" value="HydA/Nqo6-like"/>
    <property type="match status" value="1"/>
</dbReference>
<dbReference type="PROSITE" id="PS01150">
    <property type="entry name" value="COMPLEX1_20K"/>
    <property type="match status" value="1"/>
</dbReference>
<reference key="1">
    <citation type="submission" date="2005-10" db="EMBL/GenBank/DDBJ databases">
        <title>Complete sequence of chromosome 1 of Burkholderia sp. 383.</title>
        <authorList>
            <consortium name="US DOE Joint Genome Institute"/>
            <person name="Copeland A."/>
            <person name="Lucas S."/>
            <person name="Lapidus A."/>
            <person name="Barry K."/>
            <person name="Detter J.C."/>
            <person name="Glavina T."/>
            <person name="Hammon N."/>
            <person name="Israni S."/>
            <person name="Pitluck S."/>
            <person name="Chain P."/>
            <person name="Malfatti S."/>
            <person name="Shin M."/>
            <person name="Vergez L."/>
            <person name="Schmutz J."/>
            <person name="Larimer F."/>
            <person name="Land M."/>
            <person name="Kyrpides N."/>
            <person name="Lykidis A."/>
            <person name="Richardson P."/>
        </authorList>
    </citation>
    <scope>NUCLEOTIDE SEQUENCE [LARGE SCALE GENOMIC DNA]</scope>
    <source>
        <strain>ATCC 17760 / DSM 23089 / LMG 22485 / NCIMB 9086 / R18194 / 383</strain>
    </source>
</reference>
<proteinExistence type="inferred from homology"/>
<gene>
    <name evidence="2" type="primary">nuoB</name>
    <name type="ordered locus">Bcep18194_A5576</name>
</gene>
<comment type="function">
    <text evidence="1">NDH-1 shuttles electrons from NADH, via FMN and iron-sulfur (Fe-S) centers, to quinones in the respiratory chain. Couples the redox reaction to proton translocation (for every two electrons transferred, four hydrogen ions are translocated across the cytoplasmic membrane), and thus conserves the redox energy in a proton gradient (By similarity).</text>
</comment>
<comment type="catalytic activity">
    <reaction evidence="2">
        <text>a quinone + NADH + 5 H(+)(in) = a quinol + NAD(+) + 4 H(+)(out)</text>
        <dbReference type="Rhea" id="RHEA:57888"/>
        <dbReference type="ChEBI" id="CHEBI:15378"/>
        <dbReference type="ChEBI" id="CHEBI:24646"/>
        <dbReference type="ChEBI" id="CHEBI:57540"/>
        <dbReference type="ChEBI" id="CHEBI:57945"/>
        <dbReference type="ChEBI" id="CHEBI:132124"/>
    </reaction>
</comment>
<comment type="cofactor">
    <cofactor evidence="2">
        <name>[4Fe-4S] cluster</name>
        <dbReference type="ChEBI" id="CHEBI:49883"/>
    </cofactor>
    <text evidence="2">Binds 1 [4Fe-4S] cluster.</text>
</comment>
<comment type="subunit">
    <text evidence="2">NDH-1 is composed of 14 different subunits. Subunits NuoB, C, D, E, F, and G constitute the peripheral sector of the complex.</text>
</comment>
<comment type="subcellular location">
    <subcellularLocation>
        <location evidence="2">Cell inner membrane</location>
        <topology evidence="2">Peripheral membrane protein</topology>
        <orientation evidence="2">Cytoplasmic side</orientation>
    </subcellularLocation>
</comment>
<comment type="similarity">
    <text evidence="2">Belongs to the complex I 20 kDa subunit family.</text>
</comment>
<accession>Q39EE6</accession>
<evidence type="ECO:0000250" key="1"/>
<evidence type="ECO:0000255" key="2">
    <source>
        <dbReference type="HAMAP-Rule" id="MF_01356"/>
    </source>
</evidence>
<organism>
    <name type="scientific">Burkholderia lata (strain ATCC 17760 / DSM 23089 / LMG 22485 / NCIMB 9086 / R18194 / 383)</name>
    <dbReference type="NCBI Taxonomy" id="482957"/>
    <lineage>
        <taxon>Bacteria</taxon>
        <taxon>Pseudomonadati</taxon>
        <taxon>Pseudomonadota</taxon>
        <taxon>Betaproteobacteria</taxon>
        <taxon>Burkholderiales</taxon>
        <taxon>Burkholderiaceae</taxon>
        <taxon>Burkholderia</taxon>
        <taxon>Burkholderia cepacia complex</taxon>
    </lineage>
</organism>
<name>NUOB_BURL3</name>
<keyword id="KW-0004">4Fe-4S</keyword>
<keyword id="KW-0997">Cell inner membrane</keyword>
<keyword id="KW-1003">Cell membrane</keyword>
<keyword id="KW-0408">Iron</keyword>
<keyword id="KW-0411">Iron-sulfur</keyword>
<keyword id="KW-0472">Membrane</keyword>
<keyword id="KW-0479">Metal-binding</keyword>
<keyword id="KW-0520">NAD</keyword>
<keyword id="KW-0874">Quinone</keyword>
<keyword id="KW-1278">Translocase</keyword>
<keyword id="KW-0813">Transport</keyword>
<keyword id="KW-0830">Ubiquinone</keyword>